<name>GLPF_HAEIN</name>
<comment type="function">
    <text evidence="1">Mediates glycerol diffusion across the cytoplasmic membrane via a pore-type mechanism.</text>
</comment>
<comment type="catalytic activity">
    <reaction evidence="1">
        <text>glycerol(in) = glycerol(out)</text>
        <dbReference type="Rhea" id="RHEA:29675"/>
        <dbReference type="ChEBI" id="CHEBI:17754"/>
    </reaction>
</comment>
<comment type="subcellular location">
    <subcellularLocation>
        <location evidence="1">Cell inner membrane</location>
        <topology evidence="1">Multi-pass membrane protein</topology>
    </subcellularLocation>
</comment>
<comment type="domain">
    <text evidence="2">Aquaporins contain two tandem repeats each containing three membrane-spanning domains and a pore-forming loop with the signature motif Asn-Pro-Ala (NPA).</text>
</comment>
<comment type="similarity">
    <text evidence="2">Belongs to the MIP/aquaporin (TC 1.A.8) family.</text>
</comment>
<proteinExistence type="inferred from homology"/>
<protein>
    <recommendedName>
        <fullName evidence="1">Glycerol uptake facilitator protein</fullName>
    </recommendedName>
</protein>
<accession>P44826</accession>
<sequence>MDKSLKANCIGEFLGTALLIFFGVGCVAALKVAGASFGLWEISIMWGMGVALAVYATAGLSGAHLNPAVTIALWKFACFDGKKVIPYIISQMLGAFFAAALVYALYRNVFIDYETVHNIVRGTQESLSLAGTFSTYPHPSLSIGGAFAVEFVITAILMALIMALTDDGNGVPRGPLAPLLIGILIAVIGGAMGPLTGFAMNPARDFGPKFFAYLAGWGELALTGGREIPYFIVPMVAPVLGALAGAWLYKKAIGGNLPCNCGCE</sequence>
<dbReference type="EMBL" id="L42023">
    <property type="protein sequence ID" value="AAC22350.1"/>
    <property type="molecule type" value="Genomic_DNA"/>
</dbReference>
<dbReference type="PIR" id="H64086">
    <property type="entry name" value="H64086"/>
</dbReference>
<dbReference type="RefSeq" id="NP_438850.1">
    <property type="nucleotide sequence ID" value="NC_000907.1"/>
</dbReference>
<dbReference type="SMR" id="P44826"/>
<dbReference type="STRING" id="71421.HI_0690"/>
<dbReference type="EnsemblBacteria" id="AAC22350">
    <property type="protein sequence ID" value="AAC22350"/>
    <property type="gene ID" value="HI_0690"/>
</dbReference>
<dbReference type="KEGG" id="hin:HI_0690"/>
<dbReference type="PATRIC" id="fig|71421.8.peg.721"/>
<dbReference type="eggNOG" id="COG0580">
    <property type="taxonomic scope" value="Bacteria"/>
</dbReference>
<dbReference type="HOGENOM" id="CLU_020019_9_3_6"/>
<dbReference type="OrthoDB" id="9807293at2"/>
<dbReference type="PhylomeDB" id="P44826"/>
<dbReference type="BioCyc" id="HINF71421:G1GJ1-725-MONOMER"/>
<dbReference type="Proteomes" id="UP000000579">
    <property type="component" value="Chromosome"/>
</dbReference>
<dbReference type="GO" id="GO:0005886">
    <property type="term" value="C:plasma membrane"/>
    <property type="evidence" value="ECO:0000318"/>
    <property type="project" value="GO_Central"/>
</dbReference>
<dbReference type="GO" id="GO:0015254">
    <property type="term" value="F:glycerol channel activity"/>
    <property type="evidence" value="ECO:0000318"/>
    <property type="project" value="GO_Central"/>
</dbReference>
<dbReference type="GO" id="GO:0015793">
    <property type="term" value="P:glycerol transmembrane transport"/>
    <property type="evidence" value="ECO:0000318"/>
    <property type="project" value="GO_Central"/>
</dbReference>
<dbReference type="CDD" id="cd00333">
    <property type="entry name" value="MIP"/>
    <property type="match status" value="1"/>
</dbReference>
<dbReference type="Gene3D" id="1.20.1080.10">
    <property type="entry name" value="Glycerol uptake facilitator protein"/>
    <property type="match status" value="1"/>
</dbReference>
<dbReference type="InterPro" id="IPR023271">
    <property type="entry name" value="Aquaporin-like"/>
</dbReference>
<dbReference type="InterPro" id="IPR000425">
    <property type="entry name" value="MIP"/>
</dbReference>
<dbReference type="InterPro" id="IPR050363">
    <property type="entry name" value="MIP/Aquaporin"/>
</dbReference>
<dbReference type="InterPro" id="IPR022357">
    <property type="entry name" value="MIP_CS"/>
</dbReference>
<dbReference type="NCBIfam" id="TIGR00861">
    <property type="entry name" value="MIP"/>
    <property type="match status" value="1"/>
</dbReference>
<dbReference type="PANTHER" id="PTHR43829">
    <property type="entry name" value="AQUAPORIN OR AQUAGLYCEROPORIN RELATED"/>
    <property type="match status" value="1"/>
</dbReference>
<dbReference type="PANTHER" id="PTHR43829:SF9">
    <property type="entry name" value="AQUAPORIN-9"/>
    <property type="match status" value="1"/>
</dbReference>
<dbReference type="Pfam" id="PF00230">
    <property type="entry name" value="MIP"/>
    <property type="match status" value="1"/>
</dbReference>
<dbReference type="PRINTS" id="PR00783">
    <property type="entry name" value="MINTRINSICP"/>
</dbReference>
<dbReference type="SUPFAM" id="SSF81338">
    <property type="entry name" value="Aquaporin-like"/>
    <property type="match status" value="1"/>
</dbReference>
<dbReference type="PROSITE" id="PS00221">
    <property type="entry name" value="MIP"/>
    <property type="match status" value="1"/>
</dbReference>
<keyword id="KW-0997">Cell inner membrane</keyword>
<keyword id="KW-1003">Cell membrane</keyword>
<keyword id="KW-0472">Membrane</keyword>
<keyword id="KW-1185">Reference proteome</keyword>
<keyword id="KW-0677">Repeat</keyword>
<keyword id="KW-0812">Transmembrane</keyword>
<keyword id="KW-1133">Transmembrane helix</keyword>
<keyword id="KW-0813">Transport</keyword>
<organism>
    <name type="scientific">Haemophilus influenzae (strain ATCC 51907 / DSM 11121 / KW20 / Rd)</name>
    <dbReference type="NCBI Taxonomy" id="71421"/>
    <lineage>
        <taxon>Bacteria</taxon>
        <taxon>Pseudomonadati</taxon>
        <taxon>Pseudomonadota</taxon>
        <taxon>Gammaproteobacteria</taxon>
        <taxon>Pasteurellales</taxon>
        <taxon>Pasteurellaceae</taxon>
        <taxon>Haemophilus</taxon>
    </lineage>
</organism>
<feature type="chain" id="PRO_0000064083" description="Glycerol uptake facilitator protein">
    <location>
        <begin position="1"/>
        <end position="264"/>
    </location>
</feature>
<feature type="topological domain" description="Cytoplasmic" evidence="1">
    <location>
        <begin position="1"/>
        <end position="3"/>
    </location>
</feature>
<feature type="transmembrane region" description="Helical; Name=M1" evidence="1">
    <location>
        <begin position="4"/>
        <end position="32"/>
    </location>
</feature>
<feature type="topological domain" description="Periplasmic" evidence="1">
    <location>
        <begin position="33"/>
        <end position="37"/>
    </location>
</feature>
<feature type="transmembrane region" description="Helical; Name=M2" evidence="1">
    <location>
        <begin position="38"/>
        <end position="58"/>
    </location>
</feature>
<feature type="topological domain" description="Cytoplasmic" evidence="1">
    <location>
        <begin position="59"/>
        <end position="61"/>
    </location>
</feature>
<feature type="intramembrane region" evidence="1">
    <location>
        <begin position="62"/>
        <end position="65"/>
    </location>
</feature>
<feature type="intramembrane region" description="Helical; Name=M3" evidence="1">
    <location>
        <begin position="66"/>
        <end position="76"/>
    </location>
</feature>
<feature type="topological domain" description="Cytoplasmic" evidence="1">
    <location>
        <begin position="77"/>
        <end position="82"/>
    </location>
</feature>
<feature type="transmembrane region" description="Helical; Name=M4" evidence="1">
    <location>
        <begin position="83"/>
        <end position="106"/>
    </location>
</feature>
<feature type="topological domain" description="Periplasmic" evidence="1">
    <location>
        <begin position="107"/>
        <end position="141"/>
    </location>
</feature>
<feature type="transmembrane region" description="Helical; Name=M5" evidence="1">
    <location>
        <begin position="142"/>
        <end position="167"/>
    </location>
</feature>
<feature type="topological domain" description="Cytoplasmic" evidence="1">
    <location>
        <begin position="168"/>
        <end position="175"/>
    </location>
</feature>
<feature type="transmembrane region" description="Helical; Name=M6" evidence="1">
    <location>
        <begin position="176"/>
        <end position="192"/>
    </location>
</feature>
<feature type="topological domain" description="Periplasmic" evidence="1">
    <location>
        <begin position="193"/>
        <end position="196"/>
    </location>
</feature>
<feature type="intramembrane region" evidence="1">
    <location>
        <begin position="197"/>
        <end position="200"/>
    </location>
</feature>
<feature type="intramembrane region" description="Helical; Name=M7" evidence="1">
    <location>
        <begin position="201"/>
        <end position="214"/>
    </location>
</feature>
<feature type="topological domain" description="Periplasmic" evidence="1">
    <location>
        <begin position="215"/>
        <end position="229"/>
    </location>
</feature>
<feature type="transmembrane region" description="Helical; Name=M8" evidence="1">
    <location>
        <begin position="230"/>
        <end position="252"/>
    </location>
</feature>
<feature type="topological domain" description="Cytoplasmic" evidence="1">
    <location>
        <begin position="253"/>
        <end position="264"/>
    </location>
</feature>
<feature type="short sequence motif" description="NPA 1" evidence="2">
    <location>
        <begin position="66"/>
        <end position="68"/>
    </location>
</feature>
<feature type="short sequence motif" description="NPA 2" evidence="2">
    <location>
        <begin position="201"/>
        <end position="203"/>
    </location>
</feature>
<gene>
    <name type="primary">glpF</name>
    <name type="ordered locus">HI_0690</name>
</gene>
<reference key="1">
    <citation type="journal article" date="1995" name="Science">
        <title>Whole-genome random sequencing and assembly of Haemophilus influenzae Rd.</title>
        <authorList>
            <person name="Fleischmann R.D."/>
            <person name="Adams M.D."/>
            <person name="White O."/>
            <person name="Clayton R.A."/>
            <person name="Kirkness E.F."/>
            <person name="Kerlavage A.R."/>
            <person name="Bult C.J."/>
            <person name="Tomb J.-F."/>
            <person name="Dougherty B.A."/>
            <person name="Merrick J.M."/>
            <person name="McKenney K."/>
            <person name="Sutton G.G."/>
            <person name="FitzHugh W."/>
            <person name="Fields C.A."/>
            <person name="Gocayne J.D."/>
            <person name="Scott J.D."/>
            <person name="Shirley R."/>
            <person name="Liu L.-I."/>
            <person name="Glodek A."/>
            <person name="Kelley J.M."/>
            <person name="Weidman J.F."/>
            <person name="Phillips C.A."/>
            <person name="Spriggs T."/>
            <person name="Hedblom E."/>
            <person name="Cotton M.D."/>
            <person name="Utterback T.R."/>
            <person name="Hanna M.C."/>
            <person name="Nguyen D.T."/>
            <person name="Saudek D.M."/>
            <person name="Brandon R.C."/>
            <person name="Fine L.D."/>
            <person name="Fritchman J.L."/>
            <person name="Fuhrmann J.L."/>
            <person name="Geoghagen N.S.M."/>
            <person name="Gnehm C.L."/>
            <person name="McDonald L.A."/>
            <person name="Small K.V."/>
            <person name="Fraser C.M."/>
            <person name="Smith H.O."/>
            <person name="Venter J.C."/>
        </authorList>
    </citation>
    <scope>NUCLEOTIDE SEQUENCE [LARGE SCALE GENOMIC DNA]</scope>
    <source>
        <strain>ATCC 51907 / DSM 11121 / KW20 / Rd</strain>
    </source>
</reference>
<evidence type="ECO:0000250" key="1">
    <source>
        <dbReference type="UniProtKB" id="P0AER0"/>
    </source>
</evidence>
<evidence type="ECO:0000305" key="2"/>